<proteinExistence type="evidence at transcript level"/>
<organism>
    <name type="scientific">Pongo pygmaeus</name>
    <name type="common">Bornean orangutan</name>
    <dbReference type="NCBI Taxonomy" id="9600"/>
    <lineage>
        <taxon>Eukaryota</taxon>
        <taxon>Metazoa</taxon>
        <taxon>Chordata</taxon>
        <taxon>Craniata</taxon>
        <taxon>Vertebrata</taxon>
        <taxon>Euteleostomi</taxon>
        <taxon>Mammalia</taxon>
        <taxon>Eutheria</taxon>
        <taxon>Euarchontoglires</taxon>
        <taxon>Primates</taxon>
        <taxon>Haplorrhini</taxon>
        <taxon>Catarrhini</taxon>
        <taxon>Hominidae</taxon>
        <taxon>Pongo</taxon>
    </lineage>
</organism>
<protein>
    <recommendedName>
        <fullName>Transcriptional regulator ATRX</fullName>
        <ecNumber>3.6.4.12</ecNumber>
    </recommendedName>
    <alternativeName>
        <fullName>ATP-dependent helicase ATRX</fullName>
    </alternativeName>
    <alternativeName>
        <fullName>X-linked helicase II</fullName>
    </alternativeName>
    <alternativeName>
        <fullName>X-linked nuclear protein</fullName>
        <shortName>XNP</shortName>
    </alternativeName>
</protein>
<comment type="function">
    <text evidence="2">Involved in transcriptional regulation and chromatin remodeling. Facilitates DNA replication in multiple cellular environments and is required for efficient replication of a subset of genomic loci. Binds to DNA tandem repeat sequences in both telomeres and euchromatin and in vitro binds DNA quadruplex structures. May help stabilizing G-rich regions into regular chromatin structures by remodeling G4 DNA and incorporating H3.3-containing nucleosomes. Catalytic component of the chromatin remodeling complex ATRX:DAXX which has ATP-dependent DNA translocase activity and catalyzes the replication-independent deposition of histone H3.3 in pericentric DNA repeats outside S-phase and telomeres, and the in vitro remodeling of H3.3-containing nucleosomes. Its heterochromatin targeting is proposed to involve a combinatorial readout of histone H3 modifications (specifically methylation states of H3K9 and H3K4) and association with CBX5. Involved in maintaining telomere structural integrity in embryonic stem cells which probably implies recruitment of CBX5 to telomeres. May be involved in transcriptional regulation of telomeric repeat-containing RNA (TERRA). Acts as a negative regulator of chromatin incorporation of transcriptionally repressive histone MACROH2A1, particularily at telomeres. Participates in the allele-specific gene expression at the imprinted IGF2/H19 gene locus. On the maternal allele, required for the chromatin occupancy of SMC1 and CTCTF within the H19 imprinting control region (ICR) and involved in esatblishment of histone tails modifications in the ICR. May be involved in brain development and facial morphogenesis. Binds to zinc-finger coding genes with atypical chromatin signatures and regulates its H3K9me3 levels. Forms a complex with ZNF274, TRIM28 and SETDB1 to facilitate the deposition and maintenance of H3K9me3 at the 3' exons of zinc-finger genes (By similarity).</text>
</comment>
<comment type="catalytic activity">
    <reaction>
        <text>ATP + H2O = ADP + phosphate + H(+)</text>
        <dbReference type="Rhea" id="RHEA:13065"/>
        <dbReference type="ChEBI" id="CHEBI:15377"/>
        <dbReference type="ChEBI" id="CHEBI:15378"/>
        <dbReference type="ChEBI" id="CHEBI:30616"/>
        <dbReference type="ChEBI" id="CHEBI:43474"/>
        <dbReference type="ChEBI" id="CHEBI:456216"/>
        <dbReference type="EC" id="3.6.4.12"/>
    </reaction>
</comment>
<comment type="subunit">
    <text evidence="2">Interacts with DAXX to form the chromatin remodeling complex ATRX:DAXX. Probably binds EZH2. Binds annexin V in a calcium and phosphatidylcholine/phosphatidylserine-dependent manner. Interacts directly with CBX5 via the PxVxL motif. Interacts with RAD50, MRE11 and NBN; indicative for an association with the MRN complex. Interacts with histone MACROH2A1. Interacts with histone H3 peptides methylated at 'Lys-10' with preferences H3K9me3 &gt; H3K9me2 &gt; H3K9me1. Interacts with histone H3 peptides unmethylated at 'Lys-5' (H3K4me0). Interacts with MECP2, SMC1 and SMC3. Interacts with SETDB1, TRIM28 and ZNF274 (By similarity).</text>
</comment>
<comment type="subcellular location">
    <subcellularLocation>
        <location evidence="1">Nucleus</location>
    </subcellularLocation>
    <subcellularLocation>
        <location evidence="1">Chromosome</location>
        <location evidence="1">Telomere</location>
    </subcellularLocation>
    <subcellularLocation>
        <location evidence="1">Nucleus</location>
        <location evidence="1">PML body</location>
    </subcellularLocation>
    <text evidence="1">Associated with pericentromeric heterochromatin during interphase and mitosis, probably by interacting with CBX5/HP1 alpha. Colocalizes with histone H3.3, DAXX, HIRA and ASF1A at PML-nuclear bodies. Colocalizes with cohesin (SMC1 and SMC3) and MECP2 at the maternal H19 ICR (By similarity).</text>
</comment>
<comment type="domain">
    <text evidence="1">The ADD domain predominantly interacts with histone H3 trimethylated at 'Lys-10'(H3K9me3) (and to a lesser extent H3 mono- or dimethylated at 'Lys-10') and simultaneously to histone H3 unmethylated at 'Lys-5' (H3K4me0). The interaction with H3K9me3 is disrupted by the presence of H3K4me3 suggesting a readout of the combined histone H3 methylation state (By similarity).</text>
</comment>
<comment type="domain">
    <text>Contains one Pro-Xaa-Val-Xaa-Leu (PxVxL) motif, which is required for interaction with chromoshadow domains. This motif requires additional residues -7, -6, +4 and +5 of the central Val which contact the chromoshadow domain.</text>
</comment>
<comment type="similarity">
    <text evidence="9">Belongs to the SNF2/RAD54 helicase family.</text>
</comment>
<sequence>MTAEPMSESKLNTLVQKLHDFLAHSSEESEETSSPPRLAMNQNTDKISGSGSNSDMMENSKEEGTSSSEKSKSSGSSRSKRKPSIVTKYVESDDEKPLDDETVNEDASNENSENDITMQSLPKGTVIVQPEPVLNEDKDDFKGPEFRSRSKMKTENLKKRGEDGLHGIVSCTACGQQVNHFQKDSIYRHPSLQVLICKNCFKYYMSDDISRDSDGMDEQCRWCAEGGNLICCDFCHNAFCKKCILRNLGRKELSTIMDENNQWYCYICHPEPLLDLVTACNSVFDNLEQLLQQNKKKIKVDSEKSNKVYEHTSRFSPKKTSSNCNGEEKKLDDSCSGSVTYSYSALIVPKEMIKKAKKLIETTANMNSSYVKFLKQATDNSEINSATKLRQLKAFKSVLADIKKAHLALEEDLNSEFRAMDAVSKEKNTKEHKVIEAKFETKARKGEKPCALEKKDISKSEAKLSRKQVDSEHMYQNVPTEEQRANKSTGGEHKKSDRKEEPQYEPANTSEDLDMDIVSVPSSVPEDIFENLETAMEVQSSVDHQGDGSSGTEQEVESSSVKLSISSKDNRGGIKSKTTAKVTKELYVKLTPVSLSNSPIKGADCQEVPQDKDGYKSCGLNPKLEKCGLGQENSDNEHLVENEVSLLLEESDLRRSPRVKTTPLRRQTETNPVTSNSDEECNETVKEKQKLSVPVRKKDKRNSSDSAIDNPKPNKLPKSKQSETVDQNSDSDEMLAILKEVSRMSHSSSSDTDINEIHTNHKTLYDLKTQAGKDDKGKRKRKSSTSGSDFDTKKGKSAKSSIISKKKRQTQSESSNYDSELEKEIKSMSKIGAARTTKKRIPNTKDFDSSEDEKHSKKGMDNQGHKNLKTSQEGSSDDAERKQERENFSSAEGTVDKDTTIMELRDRLPKKQQASASTDGVDKLSGKEEGFTSLEVRKVAETKEKSKHLKTKICKKVQDGLSDITEKFLKKDQSDETSEDDKKQSKKGTEEKKKTSDFKKKVIKMEQQYESSSDGTEKLPEREEICHFPKGIKQIKNGTTDGEKKNKKIRDKTSKKKDELSDYAEKSTGKGDSCDSSEDKKSKNGAYGREKKRCTLLGKSSRKRQDCSSSDTEKYSMKEDGCNSSDKRLKRIELRERRNLSSKRNTKEIQSGSSSSDAEESSEDNKKKKQRTSSKKKAVIVKEKKRNSLRTSTKRKQADITSSSSSDIEDDDQNSIGEGSSDEQKIKPVTENLVLSSHTGFCQSSGDEALSKSVPVTVDDDDDDNDPENRIAKKMLLEEIKANLSSDEDGSSDDEPEEGKKRTGKQNEENPGDEEAKNQVNSESDSDSEESKKPRYRHRLLRHKLTVSDGESGEEKKTKPKEHKEVKGRNRRKVSSEDSEDSDFQESGVSEEVSESEDEQRPRTRSAKKAELEENQRSYKQKKKRRRIKVQEDSSSENKSNSEEEEEEKEEEEEEEEEEEEEEEDENDDSKSPGKGRKKIRKILKDDKLRTETQNALKEEEERRKRIAEREREREKLREVIEIEDASPTKCPITTKLVLDEDEETKEPLVQVHRNMVIKLKPHQVDGVQFMWDCCCESVKKTKKSPGSGCILAHCMGLGKTLQVVSFLHTVLLCDKLDFSTALVVCPLNTALNWMNEFEKWQEGLKDDEKLEVSELATVKRPQERSYMLQRWQEDGGVMIIGYEMYRNLAQGRNVKSRKLKEIFNKALVDPGPDFVVCDEGHILKNEASAVSKAMNSIRSRRRIILTGTPLQNNLIEYHCMVNFIKENLLGSIKEFRNRFINPIQNGQCADSTMVDVRVMKKRAHILYEMLAGCVQRKDYTALTKFLPPKHEYVLAVRMTSIQCKLYQYYLDHLTGVGNNSEGGRGKAGAKLFQDFQMLSRIWTHPWCLQLDYISKENKGYFDEDSMDEFIASDSDETSMSLSSDDYTKKKKKGKKGKKDSSSSGSGSDNDVEVIKVWNSRSRGGGEGNVDETGNNPSVSLKLEESKATSSSNPSSPAPDWYKDFVTDADAEVLEHSGKMVLLFEILRMAEEIGDKVLVFSQSLISLDLIEDFLELASREKTEDKDKPLIYKGEGKWLRNIDYYRLDGSTTAQSRKKWAEEFNDETNVRGRLFIISTKAGSLGINLVAANRVIIFDASWNPSYDIQSIFRVYRFGQTKPVYVYRFLAQGTMEDKIYDRQVTKQSLSFRVVDQQQVERHFTMNELTELYTFEPDLLDDPNSEKKKKRDTPMLPKDTILAELLQIHKEHIVGYHEHDSLLDHKEEEELTEEERKAAWAEYEAEKKGLTMRFNIPTGTNLPPVSFNSQTPYIPFNLGALSAMSNQQLEDLINQGREKVVEATNSVTAVRIQPLEDIISAVWKENMNLSEAQVQALALSRQASQELDVKRREAIYNDVLTKQQMLISCVQRILMNRRLQQQYNQQQQQQMTYQQATLGHLMMPKPPNLIMNPSNYQQIDMRGMYQPVAGGMQPPPLQRAPPPMRSKNPGPSQGKSM</sequence>
<name>ATRX_PONPY</name>
<accession>Q7YQM3</accession>
<keyword id="KW-0007">Acetylation</keyword>
<keyword id="KW-0067">ATP-binding</keyword>
<keyword id="KW-0156">Chromatin regulator</keyword>
<keyword id="KW-0158">Chromosome</keyword>
<keyword id="KW-0227">DNA damage</keyword>
<keyword id="KW-0234">DNA repair</keyword>
<keyword id="KW-0238">DNA-binding</keyword>
<keyword id="KW-0347">Helicase</keyword>
<keyword id="KW-0378">Hydrolase</keyword>
<keyword id="KW-1017">Isopeptide bond</keyword>
<keyword id="KW-0479">Metal-binding</keyword>
<keyword id="KW-0488">Methylation</keyword>
<keyword id="KW-0547">Nucleotide-binding</keyword>
<keyword id="KW-0539">Nucleus</keyword>
<keyword id="KW-0597">Phosphoprotein</keyword>
<keyword id="KW-0779">Telomere</keyword>
<keyword id="KW-0804">Transcription</keyword>
<keyword id="KW-0805">Transcription regulation</keyword>
<keyword id="KW-0832">Ubl conjugation</keyword>
<keyword id="KW-0862">Zinc</keyword>
<keyword id="KW-0863">Zinc-finger</keyword>
<evidence type="ECO:0000250" key="1"/>
<evidence type="ECO:0000250" key="2">
    <source>
        <dbReference type="UniProtKB" id="P46100"/>
    </source>
</evidence>
<evidence type="ECO:0000250" key="3">
    <source>
        <dbReference type="UniProtKB" id="P70486"/>
    </source>
</evidence>
<evidence type="ECO:0000250" key="4">
    <source>
        <dbReference type="UniProtKB" id="Q61687"/>
    </source>
</evidence>
<evidence type="ECO:0000255" key="5">
    <source>
        <dbReference type="PROSITE-ProRule" id="PRU00541"/>
    </source>
</evidence>
<evidence type="ECO:0000255" key="6">
    <source>
        <dbReference type="PROSITE-ProRule" id="PRU00542"/>
    </source>
</evidence>
<evidence type="ECO:0000255" key="7">
    <source>
        <dbReference type="PROSITE-ProRule" id="PRU00865"/>
    </source>
</evidence>
<evidence type="ECO:0000256" key="8">
    <source>
        <dbReference type="SAM" id="MobiDB-lite"/>
    </source>
</evidence>
<evidence type="ECO:0000305" key="9"/>
<dbReference type="EC" id="3.6.4.12"/>
<dbReference type="EMBL" id="AB102643">
    <property type="protein sequence ID" value="BAC81112.1"/>
    <property type="molecule type" value="mRNA"/>
</dbReference>
<dbReference type="BMRB" id="Q7YQM3"/>
<dbReference type="SMR" id="Q7YQM3"/>
<dbReference type="GO" id="GO:0000781">
    <property type="term" value="C:chromosome, telomeric region"/>
    <property type="evidence" value="ECO:0000250"/>
    <property type="project" value="UniProtKB"/>
</dbReference>
<dbReference type="GO" id="GO:0005721">
    <property type="term" value="C:pericentric heterochromatin"/>
    <property type="evidence" value="ECO:0007669"/>
    <property type="project" value="TreeGrafter"/>
</dbReference>
<dbReference type="GO" id="GO:0016605">
    <property type="term" value="C:PML body"/>
    <property type="evidence" value="ECO:0007669"/>
    <property type="project" value="UniProtKB-SubCell"/>
</dbReference>
<dbReference type="GO" id="GO:0005524">
    <property type="term" value="F:ATP binding"/>
    <property type="evidence" value="ECO:0007669"/>
    <property type="project" value="UniProtKB-KW"/>
</dbReference>
<dbReference type="GO" id="GO:0016887">
    <property type="term" value="F:ATP hydrolysis activity"/>
    <property type="evidence" value="ECO:0007669"/>
    <property type="project" value="RHEA"/>
</dbReference>
<dbReference type="GO" id="GO:0003682">
    <property type="term" value="F:chromatin binding"/>
    <property type="evidence" value="ECO:0000250"/>
    <property type="project" value="UniProtKB"/>
</dbReference>
<dbReference type="GO" id="GO:0031490">
    <property type="term" value="F:chromatin DNA binding"/>
    <property type="evidence" value="ECO:0007669"/>
    <property type="project" value="TreeGrafter"/>
</dbReference>
<dbReference type="GO" id="GO:0004386">
    <property type="term" value="F:helicase activity"/>
    <property type="evidence" value="ECO:0007669"/>
    <property type="project" value="UniProtKB-KW"/>
</dbReference>
<dbReference type="GO" id="GO:0042393">
    <property type="term" value="F:histone binding"/>
    <property type="evidence" value="ECO:0000250"/>
    <property type="project" value="UniProtKB"/>
</dbReference>
<dbReference type="GO" id="GO:0035064">
    <property type="term" value="F:methylated histone binding"/>
    <property type="evidence" value="ECO:0007669"/>
    <property type="project" value="TreeGrafter"/>
</dbReference>
<dbReference type="GO" id="GO:0008270">
    <property type="term" value="F:zinc ion binding"/>
    <property type="evidence" value="ECO:0007669"/>
    <property type="project" value="UniProtKB-KW"/>
</dbReference>
<dbReference type="GO" id="GO:0072711">
    <property type="term" value="P:cellular response to hydroxyurea"/>
    <property type="evidence" value="ECO:0000250"/>
    <property type="project" value="UniProtKB"/>
</dbReference>
<dbReference type="GO" id="GO:0006325">
    <property type="term" value="P:chromatin organization"/>
    <property type="evidence" value="ECO:0000250"/>
    <property type="project" value="UniProtKB"/>
</dbReference>
<dbReference type="GO" id="GO:0006338">
    <property type="term" value="P:chromatin remodeling"/>
    <property type="evidence" value="ECO:0000250"/>
    <property type="project" value="UniProtKB"/>
</dbReference>
<dbReference type="GO" id="GO:0030330">
    <property type="term" value="P:DNA damage response, signal transduction by p53 class mediator"/>
    <property type="evidence" value="ECO:0000250"/>
    <property type="project" value="UniProtKB"/>
</dbReference>
<dbReference type="GO" id="GO:0006281">
    <property type="term" value="P:DNA repair"/>
    <property type="evidence" value="ECO:0007669"/>
    <property type="project" value="UniProtKB-KW"/>
</dbReference>
<dbReference type="GO" id="GO:0006334">
    <property type="term" value="P:nucleosome assembly"/>
    <property type="evidence" value="ECO:0000250"/>
    <property type="project" value="UniProtKB"/>
</dbReference>
<dbReference type="GO" id="GO:0010571">
    <property type="term" value="P:positive regulation of nuclear cell cycle DNA replication"/>
    <property type="evidence" value="ECO:0000250"/>
    <property type="project" value="UniProtKB"/>
</dbReference>
<dbReference type="GO" id="GO:0032206">
    <property type="term" value="P:positive regulation of telomere maintenance"/>
    <property type="evidence" value="ECO:0000250"/>
    <property type="project" value="UniProtKB"/>
</dbReference>
<dbReference type="GO" id="GO:0045944">
    <property type="term" value="P:positive regulation of transcription by RNA polymerase II"/>
    <property type="evidence" value="ECO:0000250"/>
    <property type="project" value="UniProtKB"/>
</dbReference>
<dbReference type="GO" id="GO:0031297">
    <property type="term" value="P:replication fork processing"/>
    <property type="evidence" value="ECO:0000250"/>
    <property type="project" value="UniProtKB"/>
</dbReference>
<dbReference type="GO" id="GO:0031509">
    <property type="term" value="P:subtelomeric heterochromatin formation"/>
    <property type="evidence" value="ECO:0000250"/>
    <property type="project" value="UniProtKB"/>
</dbReference>
<dbReference type="CDD" id="cd11726">
    <property type="entry name" value="ADDz_ATRX"/>
    <property type="match status" value="1"/>
</dbReference>
<dbReference type="CDD" id="cd18068">
    <property type="entry name" value="DEXHc_ATRX"/>
    <property type="match status" value="1"/>
</dbReference>
<dbReference type="CDD" id="cd18793">
    <property type="entry name" value="SF2_C_SNF"/>
    <property type="match status" value="1"/>
</dbReference>
<dbReference type="FunFam" id="3.40.50.10810:FF:000011">
    <property type="entry name" value="Transcriptional regulator ATRX homolog"/>
    <property type="match status" value="1"/>
</dbReference>
<dbReference type="FunFam" id="3.30.40.10:FF:000091">
    <property type="entry name" value="transcriptional regulator ATRX isoform X1"/>
    <property type="match status" value="1"/>
</dbReference>
<dbReference type="FunFam" id="3.40.50.300:FF:000377">
    <property type="entry name" value="transcriptional regulator ATRX isoform X1"/>
    <property type="match status" value="1"/>
</dbReference>
<dbReference type="Gene3D" id="3.40.50.300">
    <property type="entry name" value="P-loop containing nucleotide triphosphate hydrolases"/>
    <property type="match status" value="2"/>
</dbReference>
<dbReference type="Gene3D" id="1.20.120.850">
    <property type="entry name" value="SWI2/SNF2 ATPases, N-terminal domain"/>
    <property type="match status" value="1"/>
</dbReference>
<dbReference type="Gene3D" id="3.40.50.10810">
    <property type="entry name" value="Tandem AAA-ATPase domain"/>
    <property type="match status" value="1"/>
</dbReference>
<dbReference type="Gene3D" id="3.30.40.10">
    <property type="entry name" value="Zinc/RING finger domain, C3HC4 (zinc finger)"/>
    <property type="match status" value="1"/>
</dbReference>
<dbReference type="InterPro" id="IPR025766">
    <property type="entry name" value="ADD"/>
</dbReference>
<dbReference type="InterPro" id="IPR041430">
    <property type="entry name" value="ADD_ATRX"/>
</dbReference>
<dbReference type="InterPro" id="IPR052131">
    <property type="entry name" value="ATRX_domain-containing"/>
</dbReference>
<dbReference type="InterPro" id="IPR014001">
    <property type="entry name" value="Helicase_ATP-bd"/>
</dbReference>
<dbReference type="InterPro" id="IPR001650">
    <property type="entry name" value="Helicase_C-like"/>
</dbReference>
<dbReference type="InterPro" id="IPR027417">
    <property type="entry name" value="P-loop_NTPase"/>
</dbReference>
<dbReference type="InterPro" id="IPR038718">
    <property type="entry name" value="SNF2-like_sf"/>
</dbReference>
<dbReference type="InterPro" id="IPR049730">
    <property type="entry name" value="SNF2/RAD54-like_C"/>
</dbReference>
<dbReference type="InterPro" id="IPR000330">
    <property type="entry name" value="SNF2_N"/>
</dbReference>
<dbReference type="InterPro" id="IPR011011">
    <property type="entry name" value="Znf_FYVE_PHD"/>
</dbReference>
<dbReference type="InterPro" id="IPR013083">
    <property type="entry name" value="Znf_RING/FYVE/PHD"/>
</dbReference>
<dbReference type="PANTHER" id="PTHR46357">
    <property type="entry name" value="TRANSCRIPTIONAL REGULATOR ATRX"/>
    <property type="match status" value="1"/>
</dbReference>
<dbReference type="PANTHER" id="PTHR46357:SF1">
    <property type="entry name" value="TRANSCRIPTIONAL REGULATOR ATRX"/>
    <property type="match status" value="1"/>
</dbReference>
<dbReference type="Pfam" id="PF17981">
    <property type="entry name" value="ADD_ATRX"/>
    <property type="match status" value="1"/>
</dbReference>
<dbReference type="Pfam" id="PF00271">
    <property type="entry name" value="Helicase_C"/>
    <property type="match status" value="1"/>
</dbReference>
<dbReference type="Pfam" id="PF00176">
    <property type="entry name" value="SNF2-rel_dom"/>
    <property type="match status" value="1"/>
</dbReference>
<dbReference type="SMART" id="SM00487">
    <property type="entry name" value="DEXDc"/>
    <property type="match status" value="1"/>
</dbReference>
<dbReference type="SMART" id="SM00490">
    <property type="entry name" value="HELICc"/>
    <property type="match status" value="1"/>
</dbReference>
<dbReference type="SUPFAM" id="SSF57903">
    <property type="entry name" value="FYVE/PHD zinc finger"/>
    <property type="match status" value="1"/>
</dbReference>
<dbReference type="SUPFAM" id="SSF52540">
    <property type="entry name" value="P-loop containing nucleoside triphosphate hydrolases"/>
    <property type="match status" value="2"/>
</dbReference>
<dbReference type="PROSITE" id="PS51533">
    <property type="entry name" value="ADD"/>
    <property type="match status" value="1"/>
</dbReference>
<dbReference type="PROSITE" id="PS51192">
    <property type="entry name" value="HELICASE_ATP_BIND_1"/>
    <property type="match status" value="1"/>
</dbReference>
<dbReference type="PROSITE" id="PS51194">
    <property type="entry name" value="HELICASE_CTER"/>
    <property type="match status" value="1"/>
</dbReference>
<reference key="1">
    <citation type="journal article" date="2003" name="Mol. Biol. Evol.">
        <title>Gene diversity patterns at 10 X-chromosomal loci in humans and chimpanzees.</title>
        <authorList>
            <person name="Kitano T."/>
            <person name="Schwarz C."/>
            <person name="Nickel B."/>
            <person name="Paeaebo S."/>
        </authorList>
    </citation>
    <scope>NUCLEOTIDE SEQUENCE [MRNA]</scope>
</reference>
<gene>
    <name type="primary">ATRX</name>
</gene>
<feature type="chain" id="PRO_0000074305" description="Transcriptional regulator ATRX">
    <location>
        <begin position="1"/>
        <end position="2492"/>
    </location>
</feature>
<feature type="domain" description="ADD" evidence="7">
    <location>
        <begin position="159"/>
        <end position="296"/>
    </location>
</feature>
<feature type="domain" description="Helicase ATP-binding" evidence="5">
    <location>
        <begin position="1581"/>
        <end position="1768"/>
    </location>
</feature>
<feature type="domain" description="Helicase C-terminal" evidence="6">
    <location>
        <begin position="2025"/>
        <end position="2205"/>
    </location>
</feature>
<feature type="zinc finger region" description="GATA-type; atypical" evidence="7">
    <location>
        <begin position="170"/>
        <end position="206"/>
    </location>
</feature>
<feature type="zinc finger region" description="PHD-type; atypical" evidence="7">
    <location>
        <begin position="217"/>
        <end position="272"/>
    </location>
</feature>
<feature type="region of interest" description="Disordered" evidence="8">
    <location>
        <begin position="1"/>
        <end position="146"/>
    </location>
</feature>
<feature type="region of interest" description="Disordered" evidence="8">
    <location>
        <begin position="457"/>
        <end position="581"/>
    </location>
</feature>
<feature type="region of interest" description="Disordered" evidence="8">
    <location>
        <begin position="593"/>
        <end position="619"/>
    </location>
</feature>
<feature type="region of interest" description="Disordered" evidence="8">
    <location>
        <begin position="652"/>
        <end position="949"/>
    </location>
</feature>
<feature type="region of interest" description="Disordered" evidence="8">
    <location>
        <begin position="967"/>
        <end position="1479"/>
    </location>
</feature>
<feature type="region of interest" description="Interaction with DAXX" evidence="1">
    <location>
        <begin position="1189"/>
        <end position="1326"/>
    </location>
</feature>
<feature type="region of interest" description="Disordered" evidence="8">
    <location>
        <begin position="1913"/>
        <end position="2000"/>
    </location>
</feature>
<feature type="region of interest" description="Interaction with MECP2" evidence="1">
    <location>
        <begin position="2010"/>
        <end position="2280"/>
    </location>
</feature>
<feature type="region of interest" description="Disordered" evidence="8">
    <location>
        <begin position="2462"/>
        <end position="2492"/>
    </location>
</feature>
<feature type="short sequence motif" description="PxVxL motif">
    <location>
        <begin position="581"/>
        <end position="594"/>
    </location>
</feature>
<feature type="short sequence motif" description="DEGH box">
    <location>
        <begin position="1719"/>
        <end position="1722"/>
    </location>
</feature>
<feature type="compositionally biased region" description="Basic and acidic residues" evidence="8">
    <location>
        <begin position="17"/>
        <end position="27"/>
    </location>
</feature>
<feature type="compositionally biased region" description="Polar residues" evidence="8">
    <location>
        <begin position="40"/>
        <end position="57"/>
    </location>
</feature>
<feature type="compositionally biased region" description="Basic and acidic residues" evidence="8">
    <location>
        <begin position="58"/>
        <end position="72"/>
    </location>
</feature>
<feature type="compositionally biased region" description="Acidic residues" evidence="8">
    <location>
        <begin position="92"/>
        <end position="108"/>
    </location>
</feature>
<feature type="compositionally biased region" description="Basic and acidic residues" evidence="8">
    <location>
        <begin position="135"/>
        <end position="146"/>
    </location>
</feature>
<feature type="compositionally biased region" description="Basic and acidic residues" evidence="8">
    <location>
        <begin position="457"/>
        <end position="473"/>
    </location>
</feature>
<feature type="compositionally biased region" description="Basic and acidic residues" evidence="8">
    <location>
        <begin position="481"/>
        <end position="502"/>
    </location>
</feature>
<feature type="compositionally biased region" description="Low complexity" evidence="8">
    <location>
        <begin position="557"/>
        <end position="567"/>
    </location>
</feature>
<feature type="compositionally biased region" description="Basic and acidic residues" evidence="8">
    <location>
        <begin position="755"/>
        <end position="777"/>
    </location>
</feature>
<feature type="compositionally biased region" description="Basic and acidic residues" evidence="8">
    <location>
        <begin position="843"/>
        <end position="864"/>
    </location>
</feature>
<feature type="compositionally biased region" description="Basic and acidic residues" evidence="8">
    <location>
        <begin position="878"/>
        <end position="887"/>
    </location>
</feature>
<feature type="compositionally biased region" description="Basic and acidic residues" evidence="8">
    <location>
        <begin position="894"/>
        <end position="909"/>
    </location>
</feature>
<feature type="compositionally biased region" description="Basic and acidic residues" evidence="8">
    <location>
        <begin position="920"/>
        <end position="944"/>
    </location>
</feature>
<feature type="compositionally biased region" description="Basic and acidic residues" evidence="8">
    <location>
        <begin position="967"/>
        <end position="1004"/>
    </location>
</feature>
<feature type="compositionally biased region" description="Basic and acidic residues" evidence="8">
    <location>
        <begin position="1015"/>
        <end position="1027"/>
    </location>
</feature>
<feature type="compositionally biased region" description="Basic residues" evidence="8">
    <location>
        <begin position="1045"/>
        <end position="1055"/>
    </location>
</feature>
<feature type="compositionally biased region" description="Basic and acidic residues" evidence="8">
    <location>
        <begin position="1056"/>
        <end position="1082"/>
    </location>
</feature>
<feature type="compositionally biased region" description="Basic and acidic residues" evidence="8">
    <location>
        <begin position="1103"/>
        <end position="1139"/>
    </location>
</feature>
<feature type="compositionally biased region" description="Basic residues" evidence="8">
    <location>
        <begin position="1167"/>
        <end position="1195"/>
    </location>
</feature>
<feature type="compositionally biased region" description="Polar residues" evidence="8">
    <location>
        <begin position="1233"/>
        <end position="1246"/>
    </location>
</feature>
<feature type="compositionally biased region" description="Basic and acidic residues" evidence="8">
    <location>
        <begin position="1267"/>
        <end position="1281"/>
    </location>
</feature>
<feature type="compositionally biased region" description="Acidic residues" evidence="8">
    <location>
        <begin position="1286"/>
        <end position="1297"/>
    </location>
</feature>
<feature type="compositionally biased region" description="Basic and acidic residues" evidence="8">
    <location>
        <begin position="1298"/>
        <end position="1308"/>
    </location>
</feature>
<feature type="compositionally biased region" description="Basic residues" evidence="8">
    <location>
        <begin position="1334"/>
        <end position="1345"/>
    </location>
</feature>
<feature type="compositionally biased region" description="Basic and acidic residues" evidence="8">
    <location>
        <begin position="1353"/>
        <end position="1368"/>
    </location>
</feature>
<feature type="compositionally biased region" description="Basic and acidic residues" evidence="8">
    <location>
        <begin position="1408"/>
        <end position="1417"/>
    </location>
</feature>
<feature type="compositionally biased region" description="Basic residues" evidence="8">
    <location>
        <begin position="1419"/>
        <end position="1428"/>
    </location>
</feature>
<feature type="compositionally biased region" description="Acidic residues" evidence="8">
    <location>
        <begin position="1443"/>
        <end position="1468"/>
    </location>
</feature>
<feature type="compositionally biased region" description="Basic residues" evidence="8">
    <location>
        <begin position="1929"/>
        <end position="1938"/>
    </location>
</feature>
<feature type="compositionally biased region" description="Low complexity" evidence="8">
    <location>
        <begin position="1990"/>
        <end position="1999"/>
    </location>
</feature>
<feature type="compositionally biased region" description="Pro residues" evidence="8">
    <location>
        <begin position="2468"/>
        <end position="2479"/>
    </location>
</feature>
<feature type="binding site" evidence="5">
    <location>
        <begin position="1594"/>
        <end position="1601"/>
    </location>
    <ligand>
        <name>ATP</name>
        <dbReference type="ChEBI" id="CHEBI:30616"/>
    </ligand>
</feature>
<feature type="modified residue" description="Phosphoserine" evidence="2">
    <location>
        <position position="25"/>
    </location>
</feature>
<feature type="modified residue" description="Phosphoserine" evidence="2">
    <location>
        <position position="34"/>
    </location>
</feature>
<feature type="modified residue" description="Phosphotyrosine" evidence="2">
    <location>
        <position position="89"/>
    </location>
</feature>
<feature type="modified residue" description="Phosphoserine" evidence="2">
    <location>
        <position position="92"/>
    </location>
</feature>
<feature type="modified residue" description="Phosphoserine" evidence="2">
    <location>
        <position position="112"/>
    </location>
</feature>
<feature type="modified residue" description="Phosphoserine" evidence="4">
    <location>
        <position position="213"/>
    </location>
</feature>
<feature type="modified residue" description="Phosphoserine" evidence="2">
    <location>
        <position position="316"/>
    </location>
</feature>
<feature type="modified residue" description="Phosphothreonine" evidence="2">
    <location>
        <position position="591"/>
    </location>
</feature>
<feature type="modified residue" description="Phosphoserine" evidence="2">
    <location>
        <position position="594"/>
    </location>
</feature>
<feature type="modified residue" description="Phosphoserine" evidence="2">
    <location>
        <position position="598"/>
    </location>
</feature>
<feature type="modified residue" description="Phosphoserine" evidence="2">
    <location>
        <position position="634"/>
    </location>
</feature>
<feature type="modified residue" description="Phosphothreonine" evidence="2">
    <location>
        <position position="674"/>
    </location>
</feature>
<feature type="modified residue" description="Phosphoserine" evidence="2">
    <location>
        <position position="675"/>
    </location>
</feature>
<feature type="modified residue" description="Phosphoserine" evidence="2">
    <location>
        <position position="677"/>
    </location>
</feature>
<feature type="modified residue" description="Phosphoserine" evidence="2">
    <location>
        <position position="729"/>
    </location>
</feature>
<feature type="modified residue" description="Phosphoserine" evidence="2">
    <location>
        <position position="731"/>
    </location>
</feature>
<feature type="modified residue" description="Phosphoserine" evidence="4">
    <location>
        <position position="784"/>
    </location>
</feature>
<feature type="modified residue" description="Phosphoserine" evidence="2">
    <location>
        <position position="819"/>
    </location>
</feature>
<feature type="modified residue" description="Phosphoserine" evidence="2">
    <location>
        <position position="849"/>
    </location>
</feature>
<feature type="modified residue" description="Phosphoserine" evidence="2">
    <location>
        <position position="850"/>
    </location>
</feature>
<feature type="modified residue" description="Phosphoserine" evidence="2">
    <location>
        <position position="875"/>
    </location>
</feature>
<feature type="modified residue" description="Phosphoserine" evidence="2">
    <location>
        <position position="876"/>
    </location>
</feature>
<feature type="modified residue" description="Phosphoserine" evidence="2">
    <location>
        <position position="889"/>
    </location>
</feature>
<feature type="modified residue" description="Phosphoserine" evidence="2">
    <location>
        <position position="962"/>
    </location>
</feature>
<feature type="modified residue" description="N6-acetyllysine" evidence="2">
    <location>
        <position position="967"/>
    </location>
</feature>
<feature type="modified residue" description="Phosphoserine" evidence="2">
    <location>
        <position position="974"/>
    </location>
</feature>
<feature type="modified residue" description="Phosphothreonine" evidence="2">
    <location>
        <position position="977"/>
    </location>
</feature>
<feature type="modified residue" description="Phosphoserine" evidence="3">
    <location>
        <position position="1011"/>
    </location>
</feature>
<feature type="modified residue" description="Phosphoserine" evidence="3">
    <location>
        <position position="1012"/>
    </location>
</feature>
<feature type="modified residue" description="Phosphoserine" evidence="3">
    <location>
        <position position="1013"/>
    </location>
</feature>
<feature type="modified residue" description="Phosphoserine" evidence="2">
    <location>
        <position position="1061"/>
    </location>
</feature>
<feature type="modified residue" description="Phosphotyrosine" evidence="2">
    <location>
        <position position="1063"/>
    </location>
</feature>
<feature type="modified residue" description="Phosphoserine" evidence="4">
    <location>
        <position position="1244"/>
    </location>
</feature>
<feature type="modified residue" description="Phosphoserine" evidence="4">
    <location>
        <position position="1245"/>
    </location>
</feature>
<feature type="modified residue" description="Phosphoserine" evidence="4">
    <location>
        <position position="1253"/>
    </location>
</feature>
<feature type="modified residue" description="Phosphoserine" evidence="2">
    <location>
        <position position="1322"/>
    </location>
</feature>
<feature type="modified residue" description="Phosphoserine" evidence="2">
    <location>
        <position position="1324"/>
    </location>
</feature>
<feature type="modified residue" description="Phosphoserine" evidence="2">
    <location>
        <position position="1326"/>
    </location>
</feature>
<feature type="modified residue" description="Phosphoserine" evidence="2">
    <location>
        <position position="1348"/>
    </location>
</feature>
<feature type="modified residue" description="Phosphoserine" evidence="2">
    <location>
        <position position="1352"/>
    </location>
</feature>
<feature type="modified residue" description="Phosphoserine" evidence="2">
    <location>
        <position position="1527"/>
    </location>
</feature>
<feature type="modified residue" description="Phosphothreonine" evidence="2">
    <location>
        <position position="1529"/>
    </location>
</feature>
<feature type="modified residue" description="Phosphoserine" evidence="4">
    <location>
        <position position="1906"/>
    </location>
</feature>
<feature type="modified residue" description="Phosphoserine" evidence="4">
    <location>
        <position position="1913"/>
    </location>
</feature>
<feature type="modified residue" description="Phosphoserine" evidence="2">
    <location>
        <position position="1992"/>
    </location>
</feature>
<feature type="modified residue" description="Phosphoserine" evidence="2">
    <location>
        <position position="1996"/>
    </location>
</feature>
<feature type="modified residue" description="Phosphoserine" evidence="2">
    <location>
        <position position="2220"/>
    </location>
</feature>
<feature type="modified residue" description="Omega-N-methylarginine" evidence="4">
    <location>
        <position position="2474"/>
    </location>
</feature>
<feature type="modified residue" description="Omega-N-methylarginine" evidence="4">
    <location>
        <position position="2480"/>
    </location>
</feature>
<feature type="cross-link" description="Glycyl lysine isopeptide (Lys-Gly) (interchain with G-Cter in SUMO2)" evidence="2">
    <location>
        <position position="10"/>
    </location>
</feature>
<feature type="cross-link" description="Glycyl lysine isopeptide (Lys-Gly) (interchain with G-Cter in SUMO2)" evidence="2">
    <location>
        <position position="138"/>
    </location>
</feature>
<feature type="cross-link" description="Glycyl lysine isopeptide (Lys-Gly) (interchain with G-Cter in SUMO2)" evidence="2">
    <location>
        <position position="142"/>
    </location>
</feature>
<feature type="cross-link" description="Glycyl lysine isopeptide (Lys-Gly) (interchain with G-Cter in SUMO2)" evidence="2">
    <location>
        <position position="299"/>
    </location>
</feature>
<feature type="cross-link" description="Glycyl lysine isopeptide (Lys-Gly) (interchain with G-Cter in SUMO2)" evidence="2">
    <location>
        <position position="438"/>
    </location>
</feature>
<feature type="cross-link" description="Glycyl lysine isopeptide (Lys-Gly) (interchain with G-Cter in SUMO1); alternate" evidence="2">
    <location>
        <position position="623"/>
    </location>
</feature>
<feature type="cross-link" description="Glycyl lysine isopeptide (Lys-Gly) (interchain with G-Cter in SUMO2); alternate" evidence="2">
    <location>
        <position position="623"/>
    </location>
</feature>
<feature type="cross-link" description="Glycyl lysine isopeptide (Lys-Gly) (interchain with G-Cter in SUMO2)" evidence="2">
    <location>
        <position position="1004"/>
    </location>
</feature>
<feature type="cross-link" description="Glycyl lysine isopeptide (Lys-Gly) (interchain with G-Cter in SUMO2)" evidence="2">
    <location>
        <position position="1488"/>
    </location>
</feature>
<feature type="cross-link" description="Glycyl lysine isopeptide (Lys-Gly) (interchain with G-Cter in SUMO1); alternate" evidence="2">
    <location>
        <position position="1982"/>
    </location>
</feature>
<feature type="cross-link" description="Glycyl lysine isopeptide (Lys-Gly) (interchain with G-Cter in SUMO2); alternate" evidence="2">
    <location>
        <position position="1982"/>
    </location>
</feature>
<feature type="cross-link" description="Glycyl lysine isopeptide (Lys-Gly) (interchain with G-Cter in SUMO2)" evidence="2">
    <location>
        <position position="1987"/>
    </location>
</feature>